<dbReference type="EC" id="3.4.21.90" evidence="2"/>
<dbReference type="EMBL" id="J02363">
    <property type="status" value="NOT_ANNOTATED_CDS"/>
    <property type="molecule type" value="Genomic_RNA"/>
</dbReference>
<dbReference type="RefSeq" id="YP_006491225.1">
    <molecule id="P0DOK0-1"/>
    <property type="nucleotide sequence ID" value="NC_001547.1"/>
</dbReference>
<dbReference type="SMR" id="P0DOK0"/>
<dbReference type="IntAct" id="P0DOK0">
    <property type="interactions" value="1"/>
</dbReference>
<dbReference type="SwissPalm" id="P0DOK0"/>
<dbReference type="GeneID" id="13165406"/>
<dbReference type="KEGG" id="vg:13165406"/>
<dbReference type="Proteomes" id="UP000006710">
    <property type="component" value="Genome"/>
</dbReference>
<dbReference type="GO" id="GO:0030430">
    <property type="term" value="C:host cell cytoplasm"/>
    <property type="evidence" value="ECO:0007669"/>
    <property type="project" value="UniProtKB-SubCell"/>
</dbReference>
<dbReference type="GO" id="GO:0042025">
    <property type="term" value="C:host cell nucleus"/>
    <property type="evidence" value="ECO:0007669"/>
    <property type="project" value="UniProtKB-SubCell"/>
</dbReference>
<dbReference type="GO" id="GO:0020002">
    <property type="term" value="C:host cell plasma membrane"/>
    <property type="evidence" value="ECO:0007669"/>
    <property type="project" value="UniProtKB-SubCell"/>
</dbReference>
<dbReference type="GO" id="GO:0016020">
    <property type="term" value="C:membrane"/>
    <property type="evidence" value="ECO:0007669"/>
    <property type="project" value="UniProtKB-KW"/>
</dbReference>
<dbReference type="GO" id="GO:0039619">
    <property type="term" value="C:T=4 icosahedral viral capsid"/>
    <property type="evidence" value="ECO:0007669"/>
    <property type="project" value="UniProtKB-KW"/>
</dbReference>
<dbReference type="GO" id="GO:0019031">
    <property type="term" value="C:viral envelope"/>
    <property type="evidence" value="ECO:0007669"/>
    <property type="project" value="UniProtKB-KW"/>
</dbReference>
<dbReference type="GO" id="GO:0055036">
    <property type="term" value="C:virion membrane"/>
    <property type="evidence" value="ECO:0007669"/>
    <property type="project" value="UniProtKB-SubCell"/>
</dbReference>
<dbReference type="GO" id="GO:0004252">
    <property type="term" value="F:serine-type endopeptidase activity"/>
    <property type="evidence" value="ECO:0007669"/>
    <property type="project" value="InterPro"/>
</dbReference>
<dbReference type="GO" id="GO:0005198">
    <property type="term" value="F:structural molecule activity"/>
    <property type="evidence" value="ECO:0007669"/>
    <property type="project" value="InterPro"/>
</dbReference>
<dbReference type="GO" id="GO:0075512">
    <property type="term" value="P:clathrin-dependent endocytosis of virus by host cell"/>
    <property type="evidence" value="ECO:0007669"/>
    <property type="project" value="UniProtKB-KW"/>
</dbReference>
<dbReference type="GO" id="GO:0039654">
    <property type="term" value="P:fusion of virus membrane with host endosome membrane"/>
    <property type="evidence" value="ECO:0007669"/>
    <property type="project" value="UniProtKB-KW"/>
</dbReference>
<dbReference type="GO" id="GO:0006508">
    <property type="term" value="P:proteolysis"/>
    <property type="evidence" value="ECO:0007669"/>
    <property type="project" value="UniProtKB-KW"/>
</dbReference>
<dbReference type="GO" id="GO:0039722">
    <property type="term" value="P:symbiont-mediated suppression of host toll-like receptor signaling pathway"/>
    <property type="evidence" value="ECO:0000250"/>
    <property type="project" value="UniProtKB"/>
</dbReference>
<dbReference type="GO" id="GO:0075523">
    <property type="term" value="P:viral translational frameshifting"/>
    <property type="evidence" value="ECO:0007669"/>
    <property type="project" value="UniProtKB-KW"/>
</dbReference>
<dbReference type="GO" id="GO:0019062">
    <property type="term" value="P:virion attachment to host cell"/>
    <property type="evidence" value="ECO:0007669"/>
    <property type="project" value="UniProtKB-KW"/>
</dbReference>
<dbReference type="FunFam" id="2.40.10.10:FF:000075">
    <property type="entry name" value="Structural polyprotein"/>
    <property type="match status" value="1"/>
</dbReference>
<dbReference type="Gene3D" id="1.10.287.2230">
    <property type="match status" value="1"/>
</dbReference>
<dbReference type="Gene3D" id="2.60.40.3200">
    <property type="entry name" value="Alphavirus E2 glycoprotein, A domain"/>
    <property type="match status" value="1"/>
</dbReference>
<dbReference type="Gene3D" id="2.60.40.4310">
    <property type="entry name" value="Alphavirus E2 glycoprotein, domain B"/>
    <property type="match status" value="1"/>
</dbReference>
<dbReference type="Gene3D" id="2.60.40.2400">
    <property type="entry name" value="Alphavirus E2 glycoprotein, domain C"/>
    <property type="match status" value="1"/>
</dbReference>
<dbReference type="Gene3D" id="2.40.10.10">
    <property type="entry name" value="Trypsin-like serine proteases"/>
    <property type="match status" value="2"/>
</dbReference>
<dbReference type="InterPro" id="IPR002548">
    <property type="entry name" value="Alpha_E1_glycop"/>
</dbReference>
<dbReference type="InterPro" id="IPR000936">
    <property type="entry name" value="Alpha_E2_glycop"/>
</dbReference>
<dbReference type="InterPro" id="IPR002533">
    <property type="entry name" value="Alpha_E3_glycop"/>
</dbReference>
<dbReference type="InterPro" id="IPR042304">
    <property type="entry name" value="Alphavir_E2_A"/>
</dbReference>
<dbReference type="InterPro" id="IPR042305">
    <property type="entry name" value="Alphavir_E2_B"/>
</dbReference>
<dbReference type="InterPro" id="IPR042306">
    <property type="entry name" value="Alphavir_E2_C"/>
</dbReference>
<dbReference type="InterPro" id="IPR009003">
    <property type="entry name" value="Peptidase_S1_PA"/>
</dbReference>
<dbReference type="InterPro" id="IPR043504">
    <property type="entry name" value="Peptidase_S1_PA_chymotrypsin"/>
</dbReference>
<dbReference type="InterPro" id="IPR000930">
    <property type="entry name" value="Peptidase_S3"/>
</dbReference>
<dbReference type="Pfam" id="PF01589">
    <property type="entry name" value="Alpha_E1_glycop"/>
    <property type="match status" value="1"/>
</dbReference>
<dbReference type="Pfam" id="PF00943">
    <property type="entry name" value="Alpha_E2_glycop"/>
    <property type="match status" value="1"/>
</dbReference>
<dbReference type="Pfam" id="PF01563">
    <property type="entry name" value="Alpha_E3_glycop"/>
    <property type="match status" value="1"/>
</dbReference>
<dbReference type="Pfam" id="PF00944">
    <property type="entry name" value="Peptidase_S3"/>
    <property type="match status" value="1"/>
</dbReference>
<dbReference type="PRINTS" id="PR00798">
    <property type="entry name" value="TOGAVIRIN"/>
</dbReference>
<dbReference type="SUPFAM" id="SSF50494">
    <property type="entry name" value="Trypsin-like serine proteases"/>
    <property type="match status" value="1"/>
</dbReference>
<dbReference type="PROSITE" id="PS51690">
    <property type="entry name" value="ALPHAVIRUS_CP"/>
    <property type="match status" value="1"/>
</dbReference>
<organism>
    <name type="scientific">Sindbis virus</name>
    <name type="common">SINV</name>
    <dbReference type="NCBI Taxonomy" id="11034"/>
    <lineage>
        <taxon>Viruses</taxon>
        <taxon>Riboviria</taxon>
        <taxon>Orthornavirae</taxon>
        <taxon>Kitrinoviricota</taxon>
        <taxon>Alsuviricetes</taxon>
        <taxon>Martellivirales</taxon>
        <taxon>Togaviridae</taxon>
        <taxon>Alphavirus</taxon>
    </lineage>
</organism>
<name>POLSF_SINDV</name>
<sequence length="821" mass="91215">MNRGFFNMLGRRPFPAPTAMWRPRRRRQAAPMPARNGLASQIQQLTTAVSALVIGQATRPQPPRPRPPPRQKKQAPKQPPKPKKPKTQEKKKKQPAKPKPGKRQRMALKLEADRLFDVKNEDGDVIGHALAMEGKVMKPLHVKGTIDHPVLSKLKFTKSSAYDMEFAQLPVNMRSEAFTYTSEHPEGFYNWHHGAVQYSGGRFTIPRGVGGRGDSGRPIMDNSGRVVAIVLGGADEGTRTALSVVTWNSKGKTIKTTPEGTEEWSAAPLVTAMCLLGNVSFPCDRPPTCYTREPSRALDILEENVNHEAYDTLLNAILRCGSSGRSKRSVIDDFTLTSPYLGTCSYCHHTVPCFSPVKIEQVWDEADDNTIRIQTSAQFGYDQSGAASANKYRYMSLKQDHTVKEGTMDDIKISTSGPCRRLSYKGYFLLAKCPPGDSVTVSIVSSNSATSCTLARKIKPKFVGREKYDLPPVHGKKIPCTVYDRLKETTAGYITMHRPRPHAYTSYLEESSGKVYAKPPSGKNITYECKCGDYKTGTVSTRTEITGCTAIKQCVAYKSDQTKWVFNSPDLIRHDDHTAQGKLHLPFKLIPSTCMVPVAHAPNVIHGFKHISLQLDTDHLTLLTTRRLGANPEPTTEWIVGKTVRNFTVDRDGLEYIWGNHEPVRVYAQESAPGDPHGWPHEIVQHYYHRHPVYTILAVASATVAMMIGVTVAVLCACKARRECLTPYALAPNAVIPTSLALLCCVRSANAETFTETMSYLWSNSQPFFWVQLCIPLAAFIVLMRCCSCCLPFLSGCRRLPGEGRRLRTCDHCSKCATDTV</sequence>
<keyword id="KW-0167">Capsid protein</keyword>
<keyword id="KW-1165">Clathrin-mediated endocytosis of virus by host</keyword>
<keyword id="KW-0165">Cleavage on pair of basic residues</keyword>
<keyword id="KW-1015">Disulfide bond</keyword>
<keyword id="KW-1170">Fusion of virus membrane with host endosomal membrane</keyword>
<keyword id="KW-1168">Fusion of virus membrane with host membrane</keyword>
<keyword id="KW-0325">Glycoprotein</keyword>
<keyword id="KW-1032">Host cell membrane</keyword>
<keyword id="KW-1035">Host cytoplasm</keyword>
<keyword id="KW-1043">Host membrane</keyword>
<keyword id="KW-1048">Host nucleus</keyword>
<keyword id="KW-0945">Host-virus interaction</keyword>
<keyword id="KW-0378">Hydrolase</keyword>
<keyword id="KW-0449">Lipoprotein</keyword>
<keyword id="KW-0472">Membrane</keyword>
<keyword id="KW-0564">Palmitate</keyword>
<keyword id="KW-0645">Protease</keyword>
<keyword id="KW-1185">Reference proteome</keyword>
<keyword id="KW-0688">Ribosomal frameshifting</keyword>
<keyword id="KW-0720">Serine protease</keyword>
<keyword id="KW-1144">T=4 icosahedral capsid protein</keyword>
<keyword id="KW-0812">Transmembrane</keyword>
<keyword id="KW-1133">Transmembrane helix</keyword>
<keyword id="KW-1161">Viral attachment to host cell</keyword>
<keyword id="KW-0261">Viral envelope protein</keyword>
<keyword id="KW-1162">Viral penetration into host cytoplasm</keyword>
<keyword id="KW-0946">Virion</keyword>
<keyword id="KW-1164">Virus endocytosis by host</keyword>
<keyword id="KW-1160">Virus entry into host cell</keyword>
<proteinExistence type="evidence at protein level"/>
<organismHost>
    <name type="scientific">Acrocephalus scirpaceus</name>
    <name type="common">Eurasian reed-warbler</name>
    <dbReference type="NCBI Taxonomy" id="48156"/>
</organismHost>
<organismHost>
    <name type="scientific">Aedes</name>
    <dbReference type="NCBI Taxonomy" id="7158"/>
</organismHost>
<organismHost>
    <name type="scientific">Culex</name>
    <dbReference type="NCBI Taxonomy" id="53527"/>
</organismHost>
<organismHost>
    <name type="scientific">Homo sapiens</name>
    <name type="common">Human</name>
    <dbReference type="NCBI Taxonomy" id="9606"/>
</organismHost>
<organismHost>
    <name type="scientific">Motacilla alba</name>
    <name type="common">White wagtail</name>
    <name type="synonym">Pied wagtail</name>
    <dbReference type="NCBI Taxonomy" id="45807"/>
</organismHost>
<organismHost>
    <name type="scientific">Streptopelia turtur</name>
    <dbReference type="NCBI Taxonomy" id="177155"/>
</organismHost>
<comment type="function">
    <molecule>Capsid protein</molecule>
    <text evidence="2 3 4 11 16">Forms an icosahedral capsid with a T=4 symmetry composed of 240 copies of the capsid protein surrounded by a lipid membrane through which penetrate 80 spikes composed of trimers of E1-E2 heterodimers (By similarity). The capsid protein binds to the viral RNA genome at a site adjacent to a ribosome binding site for viral genome translation following genome release (By similarity). Possesses a protease activity that results in its autocatalytic cleavage from the nascent structural protein (PubMed:1944569). Following its self-cleavage, the capsid protein transiently associates with ribosomes, and within several minutes the protein binds to viral RNA and rapidly assembles into icosahedric core particles (By similarity). The resulting nucleocapsid eventually associates with the cytoplasmic domain of the spike glycoprotein E2 at the cell membrane, leading to budding and formation of mature virions (By similarity). In case of infection, new virions attach to target cells and after clathrin-mediated endocytosis their membrane fuses with the host endosomal membrane (By similarity). This leads to the release of the nucleocapsid into the cytoplasm, followed by an uncoating event necessary for the genomic RNA to become accessible (By similarity). The uncoating might be triggered by the interaction of capsid proteins with ribosomes (PubMed:3656418). Binding of ribosomes would release the genomic RNA since the same region is genomic RNA-binding and ribosome-binding (By similarity). Specifically inhibits interleukin-1 receptor-associated kinase 1/IRAK1-dependent signaling during viral entry, representing a means by which the alphaviruses may evade innate immune detection and activation prior to viral gene expression (By similarity).</text>
</comment>
<comment type="function">
    <molecule>Assembly protein E3</molecule>
    <text evidence="2">Provides the signal sequence for the translocation of the precursor of protein E3/E2 to the host endoplasmic reticulum. Furin-cleaved E3 remains associated with spike glycoprotein E1 and mediates pH protection of the latter during the transport via the secretory pathway. After virion release from the host cell, the assembly protein E3 is gradually released in the extracellular space.</text>
</comment>
<comment type="function">
    <molecule>Spike glycoprotein E2</molecule>
    <text evidence="2 21">Plays an essential role in viral attachment to target host cell, by binding to the cell receptor. Synthesized as a pE2 precursor which is processed by furin at the cell membrane just before virion budding, giving rise to E2-E1 heterodimer. The pE2-E1 heterodimer is stable, whereas E2-E1 is unstable and dissociate at low pH. pE2 is processed at the last step, presumably to avoid E1 fusion activation before its final export to cell surface. E2 C-terminus contains a transitory transmembrane that would be disrupted by palmitoylation, resulting in reorientation of the C-terminal tail from lumenal to cytoplasmic side. This step is critical since E2 C-terminus is involved in budding by interacting with capsid proteins. This release of E2 C-terminus in cytoplasm occurs lately in protein export, and precludes premature assembly of particles at the endoplasmic reticulum membrane.</text>
</comment>
<comment type="function">
    <molecule>Protein TF</molecule>
    <text evidence="13">Plays a role in viral assembly and release.</text>
</comment>
<comment type="catalytic activity">
    <reaction evidence="2">
        <text>Autocatalytic release of the core protein from the N-terminus of the togavirus structural polyprotein by hydrolysis of a -Trp-|-Ser- bond.</text>
        <dbReference type="EC" id="3.4.21.90"/>
    </reaction>
</comment>
<comment type="subunit">
    <molecule>Capsid protein</molecule>
    <text evidence="3 5">Homomultimer (Probable). Interacts with host karyopherin KPNA4; this interaction allows the nuclear import of the viral capsid protein (By similarity). Interacts with spike glycoprotein E2 (By similarity). Interacts with host IRAK1; the interaction leads to inhibition of IRAK1-dependent signaling (By similarity).</text>
</comment>
<comment type="subunit">
    <molecule>Precursor of protein E3/E2</molecule>
    <text evidence="3 5">The precursor of protein E3/E2 and E1 form a heterodimer shortly after synthesis (By similarity).</text>
</comment>
<comment type="subunit">
    <molecule>Spike glycoprotein E2</molecule>
    <text evidence="3 5">Processing of the precursor of protein E3/E2 into E2 and E3 results in a heterodimer of the spike glycoproteins E2 and E1 (By similarity). Spike at virion surface are constituted of three E2-E1 heterodimers (By similarity).</text>
</comment>
<comment type="subcellular location">
    <molecule>Capsid protein</molecule>
    <subcellularLocation>
        <location evidence="17">Virion</location>
    </subcellularLocation>
    <subcellularLocation>
        <location evidence="14">Host cytoplasm</location>
    </subcellularLocation>
    <subcellularLocation>
        <location evidence="14">Host cell membrane</location>
    </subcellularLocation>
    <subcellularLocation>
        <location evidence="5">Host nucleus</location>
    </subcellularLocation>
    <text evidence="5">Shuttles between the cytoplasm and the nucleus.</text>
</comment>
<comment type="subcellular location">
    <molecule>Precursor of protein E3/E2</molecule>
    <subcellularLocation>
        <location evidence="1">Virion membrane</location>
        <topology evidence="6">Multi-pass membrane protein</topology>
    </subcellularLocation>
    <subcellularLocation>
        <location evidence="20">Host cell membrane</location>
        <topology evidence="6">Multi-pass membrane protein</topology>
    </subcellularLocation>
</comment>
<comment type="subcellular location">
    <molecule>Spike glycoprotein E2</molecule>
    <subcellularLocation>
        <location evidence="20">Virion membrane</location>
        <topology evidence="6">Multi-pass membrane protein</topology>
    </subcellularLocation>
    <subcellularLocation>
        <location evidence="14 17">Host cell membrane</location>
        <topology evidence="6">Multi-pass membrane protein</topology>
    </subcellularLocation>
</comment>
<comment type="subcellular location">
    <molecule>Protein TF</molecule>
    <subcellularLocation>
        <location evidence="15">Host cell membrane</location>
        <topology evidence="6">Single-pass membrane protein</topology>
    </subcellularLocation>
    <subcellularLocation>
        <location evidence="13">Virion</location>
    </subcellularLocation>
</comment>
<comment type="alternative products">
    <event type="ribosomal frameshifting"/>
    <isoform>
        <id>P0DOK0-1</id>
        <name>Frameshifted structural polyprotein</name>
        <sequence type="displayed"/>
    </isoform>
    <isoform>
        <id>P03316-1</id>
        <name>Structural polyprotein</name>
        <sequence type="external"/>
    </isoform>
</comment>
<comment type="domain">
    <text evidence="2">Structural polyprotein: As soon as the capsid protein has been autocleaved, an internal uncleaved signal peptide directs the remaining polyprotein to the endoplasmic reticulum.</text>
</comment>
<comment type="PTM">
    <molecule>Frameshifted structural polyprotein</molecule>
    <text evidence="2">Specific enzymatic cleavages in vivo yield mature proteins. Capsid protein is auto-cleaved during polyprotein translation, unmasking a signal peptide at the N-terminus of the precursor of E3/E2. The remaining polyprotein is then targeted to the host endoplasmic reticulum, where host signal peptidase cleaves it into pE2 and TF. pE2 is further processed to mature E3 and E2 by host furin in trans-Golgi vesicle.</text>
</comment>
<comment type="PTM">
    <molecule>Spike glycoprotein E2</molecule>
    <text evidence="18">Palmitoylated via thioester bonds. These palmitoylations may induce disruption of the C-terminus transmembrane. This would result in the reorientation of E2 C-terminus from lumenal to cytoplasmic side.</text>
</comment>
<comment type="PTM">
    <molecule>Protein TF</molecule>
    <text evidence="9 15 19">Palmitoylated via thioester bonds.</text>
</comment>
<comment type="miscellaneous">
    <molecule>Frameshifted structural polyprotein</molecule>
    <text evidence="23">Translated from a subgenomic RNA synthesized during togavirus replication.</text>
</comment>
<comment type="miscellaneous">
    <text>The strain HRSP sequence is shown.</text>
</comment>
<comment type="miscellaneous">
    <molecule>Isoform Frameshifted structural polyprotein</molecule>
    <text>Produced by ribosomal frameshifting.</text>
</comment>
<comment type="similarity">
    <text evidence="23">Belongs to the alphavirus frameshifted structural polyprotein family.</text>
</comment>
<comment type="online information" name="Virus Particle ExploreR db">
    <link uri="https://viperdb.org/Info_Page.php?VDB=1ld4"/>
    <text>Icosahedral capsid structure</text>
</comment>
<evidence type="ECO:0000250" key="1"/>
<evidence type="ECO:0000250" key="2">
    <source>
        <dbReference type="UniProtKB" id="P03315"/>
    </source>
</evidence>
<evidence type="ECO:0000250" key="3">
    <source>
        <dbReference type="UniProtKB" id="P03316"/>
    </source>
</evidence>
<evidence type="ECO:0000250" key="4">
    <source>
        <dbReference type="UniProtKB" id="P27284"/>
    </source>
</evidence>
<evidence type="ECO:0000250" key="5">
    <source>
        <dbReference type="UniProtKB" id="Q8JUX5"/>
    </source>
</evidence>
<evidence type="ECO:0000255" key="6"/>
<evidence type="ECO:0000255" key="7">
    <source>
        <dbReference type="PROSITE-ProRule" id="PRU01027"/>
    </source>
</evidence>
<evidence type="ECO:0000256" key="8">
    <source>
        <dbReference type="SAM" id="MobiDB-lite"/>
    </source>
</evidence>
<evidence type="ECO:0000269" key="9">
    <source>
    </source>
</evidence>
<evidence type="ECO:0000269" key="10">
    <source>
    </source>
</evidence>
<evidence type="ECO:0000269" key="11">
    <source>
    </source>
</evidence>
<evidence type="ECO:0000269" key="12">
    <source>
    </source>
</evidence>
<evidence type="ECO:0000269" key="13">
    <source>
    </source>
</evidence>
<evidence type="ECO:0000269" key="14">
    <source>
    </source>
</evidence>
<evidence type="ECO:0000269" key="15">
    <source>
    </source>
</evidence>
<evidence type="ECO:0000269" key="16">
    <source>
    </source>
</evidence>
<evidence type="ECO:0000269" key="17">
    <source>
    </source>
</evidence>
<evidence type="ECO:0000269" key="18">
    <source>
    </source>
</evidence>
<evidence type="ECO:0000269" key="19">
    <source>
    </source>
</evidence>
<evidence type="ECO:0000269" key="20">
    <source>
    </source>
</evidence>
<evidence type="ECO:0000269" key="21">
    <source>
    </source>
</evidence>
<evidence type="ECO:0000269" key="22">
    <source>
    </source>
</evidence>
<evidence type="ECO:0000305" key="23"/>
<accession>P0DOK0</accession>
<reference key="1">
    <citation type="journal article" date="1984" name="Virology">
        <title>Complete nucleotide sequence of the genomic RNA of Sindbis virus.</title>
        <authorList>
            <person name="Strauss E.G."/>
            <person name="Rice C.M."/>
            <person name="Strauss J.H."/>
        </authorList>
    </citation>
    <scope>NUCLEOTIDE SEQUENCE [GENOMIC RNA]</scope>
    <source>
        <strain>HRSP</strain>
    </source>
</reference>
<reference key="2">
    <citation type="journal article" date="1977" name="J. Virol.">
        <title>Envelopments of Sindbis virus: synthesis and organization of proteins in cells infected with wild type and maturation-defective mutants.</title>
        <authorList>
            <person name="Smith J.F."/>
            <person name="Brown D.T."/>
        </authorList>
    </citation>
    <scope>SUBCELLULAR LOCATION (PRECURSOR OF PROTEIN E3/E2)</scope>
    <scope>SUBCELLULAR LOCATION (SPIKE GLYCOPROTEIN E2)</scope>
</reference>
<reference key="3">
    <citation type="journal article" date="1987" name="J. Mol. Biol.">
        <title>Organization of the Sindbis virus nucleocapsid as revealed by bifunctional cross-linking agents.</title>
        <authorList>
            <person name="Coombs K."/>
            <person name="Brown D.T."/>
        </authorList>
    </citation>
    <scope>FUNCTION (CAPSID PROTEIN)</scope>
</reference>
<reference key="4">
    <citation type="journal article" date="1987" name="Cell">
        <title>The T=4 envelope of Sindbis virus is organized by interactions with a complementary T=3 capsid.</title>
        <authorList>
            <person name="Fuller S.D."/>
        </authorList>
    </citation>
    <scope>SUBCELLULAR LOCATION (CAPSID PROTEIN)</scope>
    <scope>SUBCELLULAR LOCATION (SPIKE GLYCOPROTEIN E2)</scope>
    <scope>SUBCELLULAR LOCATION (SPIKE GLYCOPROTEIN E1)</scope>
</reference>
<reference key="5">
    <citation type="journal article" date="1989" name="Exp. Cell Res.">
        <title>Biosynthesis, membrane translocation, and surface expression of Sindbis virus E1 glycoprotein.</title>
        <authorList>
            <person name="Migliaccio G."/>
            <person name="Pascale M.C."/>
            <person name="Leone A."/>
            <person name="Bonatti S."/>
        </authorList>
    </citation>
    <scope>SUBCELLULAR LOCATION (SPIKE GLYCOPROTEIN E1)</scope>
</reference>
<reference key="6">
    <citation type="journal article" date="1990" name="J. Virol.">
        <title>Site-directed mutagenesis of the proposed catalytic amino acids of the Sindbis virus capsid protein autoprotease.</title>
        <authorList>
            <person name="Hahn C.S."/>
            <person name="Strauss J.H."/>
        </authorList>
    </citation>
    <scope>AUTOCATALYTIC CLEAVAGE (CAPSID PROTEIN)</scope>
    <scope>MUTAGENESIS OF HIS-141; ASP-147; ASP-163 AND SER-215</scope>
</reference>
<reference key="7">
    <citation type="journal article" date="1991" name="Virology">
        <title>Site-directed mutations in Sindbis virus E2 glycoprotein's cytoplasmic domain and the 6K protein lead to similar defects in virus assembly and budding.</title>
        <authorList>
            <person name="Gaedigk-Nitschko K."/>
            <person name="Schlesinger M.J."/>
        </authorList>
    </citation>
    <scope>PALMITOYLATION AT CYS-724</scope>
    <scope>MUTAGENESIS OF CYS-724</scope>
</reference>
<reference key="8">
    <citation type="journal article" date="1991" name="Nature">
        <title>Structure of Sindbis virus core protein reveals a chymotrypsin-like serine proteinase and the organization of the virion.</title>
        <authorList>
            <person name="Choi H.K."/>
            <person name="Tong L."/>
            <person name="Minor W."/>
            <person name="Dumas P."/>
            <person name="Boege U."/>
            <person name="Rossmann M.G."/>
            <person name="Wengler G."/>
        </authorList>
    </citation>
    <scope>FUNCTION (CAPSID PROTEIN)</scope>
    <scope>CATALYTIC ACTIVITY (CAPSID PROTEIN)</scope>
    <scope>ACTIVE SITE (CAPSID PROTEIN)</scope>
</reference>
<reference key="9">
    <citation type="journal article" date="1993" name="J. Cell Biol.">
        <title>Transient translocation of the cytoplasmic (endo) domain of a type I membrane glycoprotein into cellular membranes.</title>
        <authorList>
            <person name="Liu N."/>
            <person name="Brown D.T."/>
        </authorList>
    </citation>
    <scope>TOPOLOGY</scope>
</reference>
<reference key="10">
    <citation type="journal article" date="1993" name="J. Virol.">
        <title>Site-directed mutations in the Sindbis virus E2 glycoprotein identify palmitoylation sites and affect virus budding.</title>
        <authorList>
            <person name="Ivanova L."/>
            <person name="Schlesinger M.J."/>
        </authorList>
    </citation>
    <scope>PALMITOYLATION AT CYS-744 AND CYS-745</scope>
    <scope>MUTAGENESIS OF CYS-744 AND CYS-745</scope>
</reference>
<reference key="11">
    <citation type="journal article" date="1997" name="J. Virol.">
        <title>Role of glycoprotein PE2 in formation and maturation of the Sindbis virus spike.</title>
        <authorList>
            <person name="Carleton M."/>
            <person name="Lee H."/>
            <person name="Mulvey M."/>
            <person name="Brown D.T."/>
        </authorList>
    </citation>
    <scope>FUNCTION (SPIKE GLYCOPROTEIN E2)</scope>
</reference>
<reference key="12">
    <citation type="journal article" date="1998" name="J. Virol.">
        <title>Structural localization of the E3 glycoprotein in attenuated Sindbis virus mutants.</title>
        <authorList>
            <person name="Paredes A.M."/>
            <person name="Heidner H."/>
            <person name="Thuman-Commike P."/>
            <person name="Prasad B.V.V."/>
            <person name="Johnston R.E."/>
            <person name="Chiu W."/>
        </authorList>
    </citation>
    <scope>MUTAGENESIS OF TRP-264</scope>
</reference>
<reference key="13">
    <citation type="journal article" date="1999" name="J. Virol.">
        <title>Low-pH-dependent fusion of Sindbis virus with receptor-free cholesterol- and sphingolipid-containing liposomes.</title>
        <authorList>
            <person name="Smit J.M."/>
            <person name="Bittman R."/>
            <person name="Wilschut J."/>
        </authorList>
    </citation>
    <scope>FUNCTION (SPIKE GLYCOPROTEIN E1)</scope>
</reference>
<reference key="14">
    <citation type="journal article" date="2003" name="Virology">
        <title>Individual expression of sindbis virus glycoproteins. E1 alone promotes cell fusion.</title>
        <authorList>
            <person name="Sanz M.A."/>
            <person name="Rejas M.T."/>
            <person name="Carrasco L."/>
        </authorList>
    </citation>
    <scope>FUNCTION (SPIKE GLYCOPROTEIN E1)</scope>
    <scope>SUBUNIT</scope>
</reference>
<reference key="15">
    <citation type="journal article" date="2009" name="J. Virol.">
        <title>Role of conserved cysteines in the alphavirus E3 protein.</title>
        <authorList>
            <person name="Parrott M.M."/>
            <person name="Sitarski S.A."/>
            <person name="Arnold R.J."/>
            <person name="Picton L.K."/>
            <person name="Hill R.B."/>
            <person name="Mukhopadhyay S."/>
        </authorList>
    </citation>
    <scope>FUNCTION (ASSEMBLY PROTEIN E3)</scope>
    <scope>DISULFIDE BOND (ASSEMBLY PROTEIN E3)</scope>
</reference>
<reference key="16">
    <citation type="journal article" date="2013" name="J. Virol.">
        <title>Imaging of the alphavirus capsid protein during virus replication.</title>
        <authorList>
            <person name="Zheng Y."/>
            <person name="Kielian M."/>
        </authorList>
    </citation>
    <scope>SUBCELLULAR LOCATION (CAPSID PROTEIN)</scope>
    <scope>SUBCELLULAR LOCATION (SPIKE GLYCOPROTEIN E2)</scope>
</reference>
<reference key="17">
    <citation type="journal article" date="2013" name="J. Virol.">
        <title>Functional characterization of the alphavirus TF protein.</title>
        <authorList>
            <person name="Snyder J.E."/>
            <person name="Kulcsar K.A."/>
            <person name="Schultz K.L."/>
            <person name="Riley C.P."/>
            <person name="Neary J.T."/>
            <person name="Marr S."/>
            <person name="Jose J."/>
            <person name="Griffin D.E."/>
            <person name="Kuhn R.J."/>
        </authorList>
    </citation>
    <scope>FUNCTION (PROTEIN TF)</scope>
    <scope>SUBCELLULAR LOCATION (PROTEIN TF)</scope>
</reference>
<reference key="18">
    <citation type="journal article" date="2017" name="J. Virol.">
        <title>Palmitoylation of sindbis virus TF protein Regulates its plasma membrane localization and subsequent incorporation into virions.</title>
        <authorList>
            <person name="Ramsey J."/>
            <person name="Renzi E.C."/>
            <person name="Arnold R.J."/>
            <person name="Trinidad J.C."/>
            <person name="Mukhopadhyay S."/>
        </authorList>
    </citation>
    <scope>FUNCTION (PROTEIN TF)</scope>
    <scope>PALMITOYLATION (PROTEIN TF)</scope>
    <scope>SUBCELLULAR LOCATION (PROTEIN TF)</scope>
</reference>
<feature type="chain" id="PRO_0000442833" description="Frameshifted structural polyprotein">
    <location>
        <begin position="1"/>
        <end position="821"/>
    </location>
</feature>
<feature type="chain" id="PRO_0000442834" description="Capsid protein">
    <location>
        <begin position="1"/>
        <end position="264"/>
    </location>
</feature>
<feature type="chain" id="PRO_0000442835" description="Precursor of protein E3/E2">
    <location>
        <begin position="265"/>
        <end position="751"/>
    </location>
</feature>
<feature type="chain" id="PRO_0000442836" description="Assembly protein E3">
    <location>
        <begin position="265"/>
        <end position="328"/>
    </location>
</feature>
<feature type="chain" id="PRO_0000442837" description="Spike glycoprotein E2">
    <location>
        <begin position="329"/>
        <end position="751"/>
    </location>
</feature>
<feature type="chain" id="PRO_0000442838" description="Protein TF">
    <location>
        <begin position="752"/>
        <end position="821"/>
    </location>
</feature>
<feature type="transmembrane region" description="Helical" evidence="6">
    <location>
        <begin position="696"/>
        <end position="716"/>
    </location>
</feature>
<feature type="transmembrane region" description="Helical" evidence="6">
    <location>
        <begin position="726"/>
        <end position="746"/>
    </location>
</feature>
<feature type="transmembrane region" description="Helical" evidence="6">
    <location>
        <begin position="764"/>
        <end position="784"/>
    </location>
</feature>
<feature type="domain" description="Peptidase S3" evidence="7">
    <location>
        <begin position="114"/>
        <end position="264"/>
    </location>
</feature>
<feature type="region of interest" description="Disordered" evidence="8">
    <location>
        <begin position="1"/>
        <end position="106"/>
    </location>
</feature>
<feature type="region of interest" description="Ribosome-binding" evidence="1">
    <location>
        <begin position="93"/>
        <end position="101"/>
    </location>
</feature>
<feature type="region of interest" description="Functions as an uncleaved signal peptide for the precursor of protein E3/E2" evidence="2">
    <location>
        <begin position="265"/>
        <end position="279"/>
    </location>
</feature>
<feature type="compositionally biased region" description="Polar residues" evidence="8">
    <location>
        <begin position="38"/>
        <end position="49"/>
    </location>
</feature>
<feature type="compositionally biased region" description="Basic residues" evidence="8">
    <location>
        <begin position="67"/>
        <end position="106"/>
    </location>
</feature>
<feature type="active site" description="Charge relay system" evidence="7 11">
    <location>
        <position position="141"/>
    </location>
</feature>
<feature type="active site" description="Charge relay system" evidence="7 11">
    <location>
        <position position="163"/>
    </location>
</feature>
<feature type="active site" description="Charge relay system" evidence="7 11">
    <location>
        <position position="215"/>
    </location>
</feature>
<feature type="site" description="Cleavage; by autolysis" evidence="12">
    <location>
        <begin position="264"/>
        <end position="265"/>
    </location>
</feature>
<feature type="site" description="Cleavage; by host furin" evidence="1">
    <location>
        <begin position="328"/>
        <end position="329"/>
    </location>
</feature>
<feature type="site" description="Cleavage; by host signal peptidase" evidence="1">
    <location>
        <begin position="751"/>
        <end position="752"/>
    </location>
</feature>
<feature type="site" description="Cleavage; by host signal peptidase" evidence="1">
    <location>
        <begin position="806"/>
        <end position="807"/>
    </location>
</feature>
<feature type="lipid moiety-binding region" description="S-palmitoyl cysteine; by host" evidence="9">
    <location>
        <position position="724"/>
    </location>
</feature>
<feature type="lipid moiety-binding region" description="S-palmitoyl cysteine; by host" evidence="19">
    <location>
        <position position="744"/>
    </location>
</feature>
<feature type="lipid moiety-binding region" description="S-palmitoyl cysteine; by host" evidence="19">
    <location>
        <position position="745"/>
    </location>
</feature>
<feature type="glycosylation site" description="N-linked (GlcNAc...) asparagine; by host" evidence="6">
    <location>
        <position position="278"/>
    </location>
</feature>
<feature type="glycosylation site" description="N-linked (GlcNAc...) asparagine; by host" evidence="6">
    <location>
        <position position="524"/>
    </location>
</feature>
<feature type="glycosylation site" description="N-linked (GlcNAc...) asparagine; by host" evidence="6">
    <location>
        <position position="646"/>
    </location>
</feature>
<feature type="disulfide bond" evidence="10">
    <location>
        <begin position="283"/>
        <end position="289"/>
    </location>
</feature>
<feature type="mutagenesis site" description="Complete loss of autocatalytic cleavage by capsid protein." evidence="12">
    <original>H</original>
    <variation>A</variation>
    <variation>P</variation>
    <location>
        <position position="141"/>
    </location>
</feature>
<feature type="mutagenesis site" description="No loss of autocatalytic cleavage by capsid protein. No infectious virus is produced." evidence="12">
    <original>H</original>
    <variation>R</variation>
    <location>
        <position position="141"/>
    </location>
</feature>
<feature type="mutagenesis site" description="No loss of autocatalytic cleavage by capsid protein. No infectious virus is produced." evidence="12">
    <original>D</original>
    <variation>H</variation>
    <variation>Y</variation>
    <location>
        <position position="147"/>
    </location>
</feature>
<feature type="mutagenesis site" description="No loss of autocatalytic cleavage by capsid protein. No infectious virus is produced." evidence="12">
    <original>D</original>
    <variation>H</variation>
    <location>
        <position position="163"/>
    </location>
</feature>
<feature type="mutagenesis site" description="No loss of autocatalytic cleavage by capsid protein. Infectious virus is produced." evidence="12">
    <original>D</original>
    <variation>N</variation>
    <location>
        <position position="163"/>
    </location>
</feature>
<feature type="mutagenesis site" description="Complete loss of autocatalytic cleavage by capsid protein." evidence="12">
    <original>S</original>
    <variation>A</variation>
    <variation>I</variation>
    <location>
        <position position="215"/>
    </location>
</feature>
<feature type="mutagenesis site" description="40% reduction in autocatalytic cleavage by capsid protein. No infectious virus is produced." evidence="12">
    <original>S</original>
    <variation>C</variation>
    <location>
        <position position="215"/>
    </location>
</feature>
<feature type="mutagenesis site" description="90% reduction in autocatalytic cleavage by capsid protein. No infectious virus is produced." evidence="12">
    <original>S</original>
    <variation>T</variation>
    <location>
        <position position="215"/>
    </location>
</feature>
<feature type="mutagenesis site" description="73% loss of cleavage by capsid protease." evidence="22">
    <original>W</original>
    <variation>F</variation>
    <location>
        <position position="264"/>
    </location>
</feature>
<feature type="mutagenesis site" description="Loss of palmitoylation." evidence="9">
    <original>C</original>
    <variation>A</variation>
    <location>
        <position position="724"/>
    </location>
</feature>
<feature type="mutagenesis site" description="Complete loss of infectivity.">
    <original>CC</original>
    <variation>AA</variation>
    <location>
        <begin position="744"/>
        <end position="745"/>
    </location>
</feature>
<feature type="mutagenesis site" description="Loss of palmitoylation." evidence="19">
    <original>C</original>
    <variation>A</variation>
    <location>
        <position position="744"/>
    </location>
</feature>
<feature type="mutagenesis site" description="Loss of palmitoylation." evidence="19">
    <original>C</original>
    <variation>A</variation>
    <location>
        <position position="745"/>
    </location>
</feature>
<protein>
    <recommendedName>
        <fullName>Frameshifted structural polyprotein</fullName>
    </recommendedName>
    <alternativeName>
        <fullName>p130</fullName>
    </alternativeName>
    <component>
        <recommendedName>
            <fullName>Capsid protein</fullName>
            <ecNumber evidence="2">3.4.21.90</ecNumber>
        </recommendedName>
        <alternativeName>
            <fullName>Coat protein</fullName>
            <shortName>C</shortName>
        </alternativeName>
    </component>
    <component>
        <recommendedName>
            <fullName>Precursor of protein E3/E2</fullName>
        </recommendedName>
        <alternativeName>
            <fullName>p62</fullName>
        </alternativeName>
        <alternativeName>
            <fullName>pE2</fullName>
        </alternativeName>
    </component>
    <component>
        <recommendedName>
            <fullName>Assembly protein E3</fullName>
        </recommendedName>
    </component>
    <component>
        <recommendedName>
            <fullName>Spike glycoprotein E2</fullName>
        </recommendedName>
        <alternativeName>
            <fullName>E2 envelope glycoprotein</fullName>
        </alternativeName>
    </component>
    <component>
        <recommendedName>
            <fullName>Protein TF</fullName>
        </recommendedName>
    </component>
</protein>